<comment type="function">
    <text evidence="1">Transfers the 4'-phosphopantetheine moiety from coenzyme A to a Ser of acyl-carrier-protein.</text>
</comment>
<comment type="catalytic activity">
    <reaction evidence="1">
        <text>apo-[ACP] + CoA = holo-[ACP] + adenosine 3',5'-bisphosphate + H(+)</text>
        <dbReference type="Rhea" id="RHEA:12068"/>
        <dbReference type="Rhea" id="RHEA-COMP:9685"/>
        <dbReference type="Rhea" id="RHEA-COMP:9690"/>
        <dbReference type="ChEBI" id="CHEBI:15378"/>
        <dbReference type="ChEBI" id="CHEBI:29999"/>
        <dbReference type="ChEBI" id="CHEBI:57287"/>
        <dbReference type="ChEBI" id="CHEBI:58343"/>
        <dbReference type="ChEBI" id="CHEBI:64479"/>
        <dbReference type="EC" id="2.7.8.7"/>
    </reaction>
</comment>
<comment type="cofactor">
    <cofactor evidence="1">
        <name>Mg(2+)</name>
        <dbReference type="ChEBI" id="CHEBI:18420"/>
    </cofactor>
</comment>
<comment type="subcellular location">
    <subcellularLocation>
        <location evidence="1">Cytoplasm</location>
    </subcellularLocation>
</comment>
<comment type="similarity">
    <text evidence="1">Belongs to the P-Pant transferase superfamily. AcpS family.</text>
</comment>
<reference key="1">
    <citation type="journal article" date="2001" name="Proc. Natl. Acad. Sci. U.S.A.">
        <title>Genome sequence of an industrial microorganism Streptomyces avermitilis: deducing the ability of producing secondary metabolites.</title>
        <authorList>
            <person name="Omura S."/>
            <person name="Ikeda H."/>
            <person name="Ishikawa J."/>
            <person name="Hanamoto A."/>
            <person name="Takahashi C."/>
            <person name="Shinose M."/>
            <person name="Takahashi Y."/>
            <person name="Horikawa H."/>
            <person name="Nakazawa H."/>
            <person name="Osonoe T."/>
            <person name="Kikuchi H."/>
            <person name="Shiba T."/>
            <person name="Sakaki Y."/>
            <person name="Hattori M."/>
        </authorList>
    </citation>
    <scope>NUCLEOTIDE SEQUENCE [LARGE SCALE GENOMIC DNA]</scope>
    <source>
        <strain>ATCC 31267 / DSM 46492 / JCM 5070 / NBRC 14893 / NCIMB 12804 / NRRL 8165 / MA-4680</strain>
    </source>
</reference>
<reference key="2">
    <citation type="journal article" date="2003" name="Nat. Biotechnol.">
        <title>Complete genome sequence and comparative analysis of the industrial microorganism Streptomyces avermitilis.</title>
        <authorList>
            <person name="Ikeda H."/>
            <person name="Ishikawa J."/>
            <person name="Hanamoto A."/>
            <person name="Shinose M."/>
            <person name="Kikuchi H."/>
            <person name="Shiba T."/>
            <person name="Sakaki Y."/>
            <person name="Hattori M."/>
            <person name="Omura S."/>
        </authorList>
    </citation>
    <scope>NUCLEOTIDE SEQUENCE [LARGE SCALE GENOMIC DNA]</scope>
    <source>
        <strain>ATCC 31267 / DSM 46492 / JCM 5070 / NBRC 14893 / NCIMB 12804 / NRRL 8165 / MA-4680</strain>
    </source>
</reference>
<name>ACPS_STRAW</name>
<dbReference type="EC" id="2.7.8.7" evidence="1"/>
<dbReference type="EMBL" id="BA000030">
    <property type="protein sequence ID" value="BAC72676.1"/>
    <property type="molecule type" value="Genomic_DNA"/>
</dbReference>
<dbReference type="RefSeq" id="WP_010986370.1">
    <property type="nucleotide sequence ID" value="NZ_JZJK01000077.1"/>
</dbReference>
<dbReference type="SMR" id="Q82DL2"/>
<dbReference type="GeneID" id="41542047"/>
<dbReference type="KEGG" id="sma:SAVERM_4964"/>
<dbReference type="eggNOG" id="COG0736">
    <property type="taxonomic scope" value="Bacteria"/>
</dbReference>
<dbReference type="HOGENOM" id="CLU_089696_0_0_11"/>
<dbReference type="OrthoDB" id="517356at2"/>
<dbReference type="Proteomes" id="UP000000428">
    <property type="component" value="Chromosome"/>
</dbReference>
<dbReference type="GO" id="GO:0005737">
    <property type="term" value="C:cytoplasm"/>
    <property type="evidence" value="ECO:0007669"/>
    <property type="project" value="UniProtKB-SubCell"/>
</dbReference>
<dbReference type="GO" id="GO:0008897">
    <property type="term" value="F:holo-[acyl-carrier-protein] synthase activity"/>
    <property type="evidence" value="ECO:0007669"/>
    <property type="project" value="UniProtKB-UniRule"/>
</dbReference>
<dbReference type="GO" id="GO:0000287">
    <property type="term" value="F:magnesium ion binding"/>
    <property type="evidence" value="ECO:0007669"/>
    <property type="project" value="UniProtKB-UniRule"/>
</dbReference>
<dbReference type="GO" id="GO:0006633">
    <property type="term" value="P:fatty acid biosynthetic process"/>
    <property type="evidence" value="ECO:0007669"/>
    <property type="project" value="UniProtKB-UniRule"/>
</dbReference>
<dbReference type="Gene3D" id="3.90.470.20">
    <property type="entry name" value="4'-phosphopantetheinyl transferase domain"/>
    <property type="match status" value="1"/>
</dbReference>
<dbReference type="HAMAP" id="MF_00101">
    <property type="entry name" value="AcpS"/>
    <property type="match status" value="1"/>
</dbReference>
<dbReference type="InterPro" id="IPR008278">
    <property type="entry name" value="4-PPantetheinyl_Trfase_dom"/>
</dbReference>
<dbReference type="InterPro" id="IPR037143">
    <property type="entry name" value="4-PPantetheinyl_Trfase_dom_sf"/>
</dbReference>
<dbReference type="InterPro" id="IPR002582">
    <property type="entry name" value="ACPS"/>
</dbReference>
<dbReference type="InterPro" id="IPR004568">
    <property type="entry name" value="Ppantetheine-prot_Trfase_dom"/>
</dbReference>
<dbReference type="NCBIfam" id="TIGR00516">
    <property type="entry name" value="acpS"/>
    <property type="match status" value="1"/>
</dbReference>
<dbReference type="NCBIfam" id="TIGR00556">
    <property type="entry name" value="pantethn_trn"/>
    <property type="match status" value="1"/>
</dbReference>
<dbReference type="NCBIfam" id="NF000832">
    <property type="entry name" value="PRK00070.3-2"/>
    <property type="match status" value="1"/>
</dbReference>
<dbReference type="Pfam" id="PF01648">
    <property type="entry name" value="ACPS"/>
    <property type="match status" value="1"/>
</dbReference>
<dbReference type="SUPFAM" id="SSF56214">
    <property type="entry name" value="4'-phosphopantetheinyl transferase"/>
    <property type="match status" value="1"/>
</dbReference>
<protein>
    <recommendedName>
        <fullName evidence="1">Holo-[acyl-carrier-protein] synthase</fullName>
        <shortName evidence="1">Holo-ACP synthase</shortName>
        <ecNumber evidence="1">2.7.8.7</ecNumber>
    </recommendedName>
    <alternativeName>
        <fullName evidence="1">4'-phosphopantetheinyl transferase AcpS</fullName>
    </alternativeName>
</protein>
<sequence length="123" mass="12991">MSIIGVGIDVAEIDRFRASLERTPGLADRLFLERELLLPNGERRGIASLAARFAAKEAVAKALGAPGGLYWTDAEVWVEDSGRPRLRVTGTVAARAAELGVQSWHVSLSHDAGVASAVVVAEG</sequence>
<evidence type="ECO:0000255" key="1">
    <source>
        <dbReference type="HAMAP-Rule" id="MF_00101"/>
    </source>
</evidence>
<gene>
    <name evidence="1" type="primary">acpS</name>
    <name type="ordered locus">SAV_4964</name>
</gene>
<feature type="chain" id="PRO_0000175710" description="Holo-[acyl-carrier-protein] synthase">
    <location>
        <begin position="1"/>
        <end position="123"/>
    </location>
</feature>
<feature type="binding site" evidence="1">
    <location>
        <position position="9"/>
    </location>
    <ligand>
        <name>Mg(2+)</name>
        <dbReference type="ChEBI" id="CHEBI:18420"/>
    </ligand>
</feature>
<feature type="binding site" evidence="1">
    <location>
        <position position="57"/>
    </location>
    <ligand>
        <name>Mg(2+)</name>
        <dbReference type="ChEBI" id="CHEBI:18420"/>
    </ligand>
</feature>
<accession>Q82DL2</accession>
<keyword id="KW-0963">Cytoplasm</keyword>
<keyword id="KW-0275">Fatty acid biosynthesis</keyword>
<keyword id="KW-0276">Fatty acid metabolism</keyword>
<keyword id="KW-0444">Lipid biosynthesis</keyword>
<keyword id="KW-0443">Lipid metabolism</keyword>
<keyword id="KW-0460">Magnesium</keyword>
<keyword id="KW-0479">Metal-binding</keyword>
<keyword id="KW-1185">Reference proteome</keyword>
<keyword id="KW-0808">Transferase</keyword>
<organism>
    <name type="scientific">Streptomyces avermitilis (strain ATCC 31267 / DSM 46492 / JCM 5070 / NBRC 14893 / NCIMB 12804 / NRRL 8165 / MA-4680)</name>
    <dbReference type="NCBI Taxonomy" id="227882"/>
    <lineage>
        <taxon>Bacteria</taxon>
        <taxon>Bacillati</taxon>
        <taxon>Actinomycetota</taxon>
        <taxon>Actinomycetes</taxon>
        <taxon>Kitasatosporales</taxon>
        <taxon>Streptomycetaceae</taxon>
        <taxon>Streptomyces</taxon>
    </lineage>
</organism>
<proteinExistence type="inferred from homology"/>